<protein>
    <recommendedName>
        <fullName evidence="1">Small ribosomal subunit protein uS11c</fullName>
    </recommendedName>
    <alternativeName>
        <fullName evidence="2">30S ribosomal protein S11, chloroplastic</fullName>
    </alternativeName>
</protein>
<dbReference type="EMBL" id="M35831">
    <property type="protein sequence ID" value="AAA84494.1"/>
    <property type="molecule type" value="Genomic_DNA"/>
</dbReference>
<dbReference type="EMBL" id="X86563">
    <property type="protein sequence ID" value="CAA60318.1"/>
    <property type="molecule type" value="Genomic_DNA"/>
</dbReference>
<dbReference type="EMBL" id="X07810">
    <property type="protein sequence ID" value="CAA30669.1"/>
    <property type="molecule type" value="Genomic_DNA"/>
</dbReference>
<dbReference type="PIR" id="S58584">
    <property type="entry name" value="S58584"/>
</dbReference>
<dbReference type="RefSeq" id="NP_043056.1">
    <property type="nucleotide sequence ID" value="NC_001666.2"/>
</dbReference>
<dbReference type="SMR" id="P09561"/>
<dbReference type="FunCoup" id="P09561">
    <property type="interactions" value="601"/>
</dbReference>
<dbReference type="STRING" id="4577.P09561"/>
<dbReference type="PaxDb" id="4577-GRMZM2G427564_P01"/>
<dbReference type="GeneID" id="845228"/>
<dbReference type="KEGG" id="zma:845228"/>
<dbReference type="MaizeGDB" id="66411"/>
<dbReference type="eggNOG" id="KOG0408">
    <property type="taxonomic scope" value="Eukaryota"/>
</dbReference>
<dbReference type="HOGENOM" id="CLU_072439_5_1_1"/>
<dbReference type="InParanoid" id="P09561"/>
<dbReference type="OMA" id="TAVDQGM"/>
<dbReference type="OrthoDB" id="535480at2759"/>
<dbReference type="Proteomes" id="UP000007305">
    <property type="component" value="Chloroplast"/>
</dbReference>
<dbReference type="GO" id="GO:0009507">
    <property type="term" value="C:chloroplast"/>
    <property type="evidence" value="ECO:0007669"/>
    <property type="project" value="UniProtKB-SubCell"/>
</dbReference>
<dbReference type="GO" id="GO:1990904">
    <property type="term" value="C:ribonucleoprotein complex"/>
    <property type="evidence" value="ECO:0007669"/>
    <property type="project" value="UniProtKB-KW"/>
</dbReference>
<dbReference type="GO" id="GO:0005840">
    <property type="term" value="C:ribosome"/>
    <property type="evidence" value="ECO:0007669"/>
    <property type="project" value="UniProtKB-KW"/>
</dbReference>
<dbReference type="GO" id="GO:0019843">
    <property type="term" value="F:rRNA binding"/>
    <property type="evidence" value="ECO:0007669"/>
    <property type="project" value="UniProtKB-UniRule"/>
</dbReference>
<dbReference type="GO" id="GO:0003735">
    <property type="term" value="F:structural constituent of ribosome"/>
    <property type="evidence" value="ECO:0000318"/>
    <property type="project" value="GO_Central"/>
</dbReference>
<dbReference type="GO" id="GO:0006412">
    <property type="term" value="P:translation"/>
    <property type="evidence" value="ECO:0000318"/>
    <property type="project" value="GO_Central"/>
</dbReference>
<dbReference type="FunFam" id="3.30.420.80:FF:000003">
    <property type="entry name" value="30S ribosomal protein S11, chloroplastic"/>
    <property type="match status" value="1"/>
</dbReference>
<dbReference type="Gene3D" id="3.30.420.80">
    <property type="entry name" value="Ribosomal protein S11"/>
    <property type="match status" value="1"/>
</dbReference>
<dbReference type="HAMAP" id="MF_01310">
    <property type="entry name" value="Ribosomal_uS11"/>
    <property type="match status" value="1"/>
</dbReference>
<dbReference type="InterPro" id="IPR001971">
    <property type="entry name" value="Ribosomal_uS11"/>
</dbReference>
<dbReference type="InterPro" id="IPR018102">
    <property type="entry name" value="Ribosomal_uS11_CS"/>
</dbReference>
<dbReference type="InterPro" id="IPR036967">
    <property type="entry name" value="Ribosomal_uS11_sf"/>
</dbReference>
<dbReference type="NCBIfam" id="NF003698">
    <property type="entry name" value="PRK05309.1"/>
    <property type="match status" value="1"/>
</dbReference>
<dbReference type="PANTHER" id="PTHR11759">
    <property type="entry name" value="40S RIBOSOMAL PROTEIN S14/30S RIBOSOMAL PROTEIN S11"/>
    <property type="match status" value="1"/>
</dbReference>
<dbReference type="Pfam" id="PF00411">
    <property type="entry name" value="Ribosomal_S11"/>
    <property type="match status" value="1"/>
</dbReference>
<dbReference type="PIRSF" id="PIRSF002131">
    <property type="entry name" value="Ribosomal_S11"/>
    <property type="match status" value="1"/>
</dbReference>
<dbReference type="SUPFAM" id="SSF53137">
    <property type="entry name" value="Translational machinery components"/>
    <property type="match status" value="1"/>
</dbReference>
<dbReference type="PROSITE" id="PS00054">
    <property type="entry name" value="RIBOSOMAL_S11"/>
    <property type="match status" value="1"/>
</dbReference>
<keyword id="KW-0150">Chloroplast</keyword>
<keyword id="KW-0934">Plastid</keyword>
<keyword id="KW-1185">Reference proteome</keyword>
<keyword id="KW-0687">Ribonucleoprotein</keyword>
<keyword id="KW-0689">Ribosomal protein</keyword>
<keyword id="KW-0694">RNA-binding</keyword>
<keyword id="KW-0699">rRNA-binding</keyword>
<geneLocation type="chloroplast"/>
<organism>
    <name type="scientific">Zea mays</name>
    <name type="common">Maize</name>
    <dbReference type="NCBI Taxonomy" id="4577"/>
    <lineage>
        <taxon>Eukaryota</taxon>
        <taxon>Viridiplantae</taxon>
        <taxon>Streptophyta</taxon>
        <taxon>Embryophyta</taxon>
        <taxon>Tracheophyta</taxon>
        <taxon>Spermatophyta</taxon>
        <taxon>Magnoliopsida</taxon>
        <taxon>Liliopsida</taxon>
        <taxon>Poales</taxon>
        <taxon>Poaceae</taxon>
        <taxon>PACMAD clade</taxon>
        <taxon>Panicoideae</taxon>
        <taxon>Andropogonodae</taxon>
        <taxon>Andropogoneae</taxon>
        <taxon>Tripsacinae</taxon>
        <taxon>Zea</taxon>
    </lineage>
</organism>
<sequence>MTKAIPKIGSRKKVRIGLRRNARFSLRKSARRITKGIIHVQASFNNTIITVTDPQGRVVFWSSAGTCGFKSSRKASPYAGQRTAVDAIRTVGLQRAEVMVKGAGSGRDAALRAIAKSGVRLSCIRDVTPMPHNGCRPPKKRRL</sequence>
<name>RR11_MAIZE</name>
<comment type="subunit">
    <text evidence="1">Part of the 30S ribosomal subunit.</text>
</comment>
<comment type="subcellular location">
    <subcellularLocation>
        <location>Plastid</location>
        <location>Chloroplast</location>
    </subcellularLocation>
</comment>
<comment type="similarity">
    <text evidence="1">Belongs to the universal ribosomal protein uS11 family.</text>
</comment>
<reference key="1">
    <citation type="journal article" date="1988" name="Biochem. Int.">
        <title>Nucleotide sequence of maize chloroplast rpS11 with conserved amino acid sequence between eukaryotes, bacteria and plastids.</title>
        <authorList>
            <person name="Markmann-Mulisch U."/>
            <person name="Subramanian A.R."/>
        </authorList>
    </citation>
    <scope>NUCLEOTIDE SEQUENCE [GENOMIC DNA]</scope>
</reference>
<reference key="2">
    <citation type="journal article" date="1995" name="J. Mol. Biol.">
        <title>Complete sequence of the maize chloroplast genome: gene content, hotspots of divergence and fine tuning of genetic information by transcript editing.</title>
        <authorList>
            <person name="Maier R.M."/>
            <person name="Neckermann K."/>
            <person name="Igloi G.L."/>
            <person name="Koessel H."/>
        </authorList>
    </citation>
    <scope>NUCLEOTIDE SEQUENCE [LARGE SCALE GENOMIC DNA]</scope>
    <source>
        <strain>cv. B73</strain>
    </source>
</reference>
<reference key="3">
    <citation type="journal article" date="1988" name="Nucleic Acids Res.">
        <title>Structure and expression of the gene coding for the alpha-subunit of DNA-dependent RNA polymerase from the chloroplast genome of Zea mays.</title>
        <authorList>
            <person name="Ruf M."/>
            <person name="Koessel H."/>
        </authorList>
    </citation>
    <scope>NUCLEOTIDE SEQUENCE [LARGE SCALE GENOMIC DNA] OF 63-143</scope>
    <source>
        <strain>cv. B73</strain>
    </source>
</reference>
<feature type="chain" id="PRO_0000123306" description="Small ribosomal subunit protein uS11c">
    <location>
        <begin position="1"/>
        <end position="143"/>
    </location>
</feature>
<feature type="sequence conflict" description="In Ref. 3." evidence="2" ref="3">
    <original>SAGT</original>
    <variation>PPQY</variation>
    <location>
        <begin position="63"/>
        <end position="66"/>
    </location>
</feature>
<evidence type="ECO:0000255" key="1">
    <source>
        <dbReference type="HAMAP-Rule" id="MF_01310"/>
    </source>
</evidence>
<evidence type="ECO:0000305" key="2"/>
<gene>
    <name evidence="1" type="primary">rps11</name>
</gene>
<proteinExistence type="inferred from homology"/>
<accession>P09561</accession>